<keyword id="KW-0233">DNA recombination</keyword>
<keyword id="KW-0238">DNA-binding</keyword>
<keyword id="KW-1185">Reference proteome</keyword>
<keyword id="KW-0814">Transposable element</keyword>
<keyword id="KW-0815">Transposition</keyword>
<proteinExistence type="inferred from homology"/>
<sequence length="326" mass="37851">MSHQLTFADSEFSSKRRQTRKEIFLSRMEQILPWQNMVEVIEPFYPKAGNGRRPYPLETMLRIHCMQHWYNLSDGAMEDALYEIASMRLFARLSLDSALPDRTTIMNFRHLLEQHQLARQLFKTINRWLAEAGVMMTQGTLVDATIIEAPSSTKNKEQQRDPEMHQTKKGNQWHFGMKAHIGVDAKSGLTHSLVTTAANEHDLNQLGNLLHGEEQFVSADAGYQGAPQREELAEVDVDWLIAERPGKVRTLKQHPRKNKTAINIEYMKASIRARVEHPFRIIKRQFGFVKARYKGLLKNDNQLAMLFTLANLFRADQMIRQWERSH</sequence>
<evidence type="ECO:0000305" key="1"/>
<accession>P0CE55</accession>
<accession>O07987</accession>
<accession>O07988</accession>
<accession>P03837</accession>
<accession>P76355</accession>
<accession>Q2MBK1</accession>
<accession>Q2MBM8</accession>
<feature type="chain" id="PRO_0000392486" description="Transposase InsH for insertion sequence element IS5K">
    <location>
        <begin position="1"/>
        <end position="326"/>
    </location>
</feature>
<name>INSH8_ECOLI</name>
<dbReference type="EMBL" id="U00096">
    <property type="protein sequence ID" value="AAC75252.2"/>
    <property type="molecule type" value="Genomic_DNA"/>
</dbReference>
<dbReference type="EMBL" id="AP009048">
    <property type="protein sequence ID" value="BAE76655.1"/>
    <property type="status" value="ALT_INIT"/>
    <property type="molecule type" value="Genomic_DNA"/>
</dbReference>
<dbReference type="RefSeq" id="NP_414793.1">
    <property type="nucleotide sequence ID" value="NC_000913.3"/>
</dbReference>
<dbReference type="RefSeq" id="NP_415084.1">
    <property type="nucleotide sequence ID" value="NC_000913.3"/>
</dbReference>
<dbReference type="RefSeq" id="NP_415189.1">
    <property type="nucleotide sequence ID" value="NC_000913.3"/>
</dbReference>
<dbReference type="RefSeq" id="NP_415847.1">
    <property type="nucleotide sequence ID" value="NC_000913.3"/>
</dbReference>
<dbReference type="RefSeq" id="NP_416535.1">
    <property type="nucleotide sequence ID" value="NC_000913.3"/>
</dbReference>
<dbReference type="RefSeq" id="NP_416696.1">
    <property type="nucleotide sequence ID" value="NC_000913.3"/>
</dbReference>
<dbReference type="RefSeq" id="NP_417456.1">
    <property type="nucleotide sequence ID" value="NC_000913.3"/>
</dbReference>
<dbReference type="RefSeq" id="NP_417685.1">
    <property type="nucleotide sequence ID" value="NC_000913.3"/>
</dbReference>
<dbReference type="RefSeq" id="NP_417962.1">
    <property type="nucleotide sequence ID" value="NC_000913.3"/>
</dbReference>
<dbReference type="RefSeq" id="WP_000019403.1">
    <property type="nucleotide sequence ID" value="NZ_SSZK01000120.1"/>
</dbReference>
<dbReference type="FunCoup" id="P0CE55">
    <property type="interactions" value="11"/>
</dbReference>
<dbReference type="jPOST" id="P0CE55"/>
<dbReference type="EnsemblBacteria" id="AAC75252">
    <property type="protein sequence ID" value="AAC75252"/>
    <property type="gene ID" value="b2192"/>
</dbReference>
<dbReference type="GeneID" id="949121"/>
<dbReference type="KEGG" id="ecj:JW2179"/>
<dbReference type="KEGG" id="eco:b0259"/>
<dbReference type="KEGG" id="eco:b0552"/>
<dbReference type="KEGG" id="eco:b0656"/>
<dbReference type="KEGG" id="eco:b2030"/>
<dbReference type="KEGG" id="eco:b2192"/>
<dbReference type="KEGG" id="eco:b2982"/>
<dbReference type="KEGG" id="eco:b3218"/>
<dbReference type="KEGG" id="eco:b3505"/>
<dbReference type="KEGG" id="eco:b4711"/>
<dbReference type="KEGG" id="ecoc:C3026_01250"/>
<dbReference type="KEGG" id="ecoc:C3026_02730"/>
<dbReference type="KEGG" id="ecoc:C3026_03280"/>
<dbReference type="KEGG" id="ecoc:C3026_07795"/>
<dbReference type="KEGG" id="ecoc:C3026_10760"/>
<dbReference type="KEGG" id="ecoc:C3026_11440"/>
<dbReference type="KEGG" id="ecoc:C3026_12250"/>
<dbReference type="KEGG" id="ecoc:C3026_16315"/>
<dbReference type="KEGG" id="ecoc:C3026_17505"/>
<dbReference type="KEGG" id="ecoc:C3026_18985"/>
<dbReference type="KEGG" id="ecoc:C3026_23975"/>
<dbReference type="EchoBASE" id="EB4736"/>
<dbReference type="HOGENOM" id="CLU_049873_1_2_6"/>
<dbReference type="InParanoid" id="P0CE55"/>
<dbReference type="PhylomeDB" id="P0CE55"/>
<dbReference type="BioCyc" id="EcoCyc:MONOMER0-4238"/>
<dbReference type="PRO" id="PR:P0CE55"/>
<dbReference type="Proteomes" id="UP000000625">
    <property type="component" value="Chromosome"/>
</dbReference>
<dbReference type="GO" id="GO:0005829">
    <property type="term" value="C:cytosol"/>
    <property type="evidence" value="ECO:0000318"/>
    <property type="project" value="GO_Central"/>
</dbReference>
<dbReference type="GO" id="GO:0003677">
    <property type="term" value="F:DNA binding"/>
    <property type="evidence" value="ECO:0007669"/>
    <property type="project" value="UniProtKB-KW"/>
</dbReference>
<dbReference type="GO" id="GO:0004803">
    <property type="term" value="F:transposase activity"/>
    <property type="evidence" value="ECO:0000318"/>
    <property type="project" value="GO_Central"/>
</dbReference>
<dbReference type="GO" id="GO:0006313">
    <property type="term" value="P:DNA transposition"/>
    <property type="evidence" value="ECO:0000318"/>
    <property type="project" value="GO_Central"/>
</dbReference>
<dbReference type="InterPro" id="IPR047959">
    <property type="entry name" value="Transpos_IS5"/>
</dbReference>
<dbReference type="InterPro" id="IPR002559">
    <property type="entry name" value="Transposase_11"/>
</dbReference>
<dbReference type="InterPro" id="IPR008490">
    <property type="entry name" value="Transposase_InsH_N"/>
</dbReference>
<dbReference type="NCBIfam" id="NF033581">
    <property type="entry name" value="transpos_IS5_4"/>
    <property type="match status" value="1"/>
</dbReference>
<dbReference type="PANTHER" id="PTHR35604">
    <property type="entry name" value="TRANSPOSASE INSH FOR INSERTION SEQUENCE ELEMENT IS5A-RELATED"/>
    <property type="match status" value="1"/>
</dbReference>
<dbReference type="PANTHER" id="PTHR35604:SF2">
    <property type="entry name" value="TRANSPOSASE INSH FOR INSERTION SEQUENCE ELEMENT IS5A-RELATED"/>
    <property type="match status" value="1"/>
</dbReference>
<dbReference type="Pfam" id="PF01609">
    <property type="entry name" value="DDE_Tnp_1"/>
    <property type="match status" value="1"/>
</dbReference>
<dbReference type="Pfam" id="PF05598">
    <property type="entry name" value="DUF772"/>
    <property type="match status" value="1"/>
</dbReference>
<protein>
    <recommendedName>
        <fullName>Transposase InsH for insertion sequence element IS5K</fullName>
    </recommendedName>
</protein>
<gene>
    <name type="primary">insH8</name>
    <name type="ordered locus">b2192</name>
    <name type="ordered locus">JW2179</name>
</gene>
<comment type="function">
    <text>Involved in the transposition of the insertion sequence IS5.</text>
</comment>
<comment type="similarity">
    <text evidence="1">Belongs to the transposase 11 family.</text>
</comment>
<comment type="sequence caution" evidence="1">
    <conflict type="erroneous initiation">
        <sequence resource="EMBL-CDS" id="BAE76655"/>
    </conflict>
    <text>Extended N-terminus.</text>
</comment>
<organism>
    <name type="scientific">Escherichia coli (strain K12)</name>
    <dbReference type="NCBI Taxonomy" id="83333"/>
    <lineage>
        <taxon>Bacteria</taxon>
        <taxon>Pseudomonadati</taxon>
        <taxon>Pseudomonadota</taxon>
        <taxon>Gammaproteobacteria</taxon>
        <taxon>Enterobacterales</taxon>
        <taxon>Enterobacteriaceae</taxon>
        <taxon>Escherichia</taxon>
    </lineage>
</organism>
<reference key="1">
    <citation type="journal article" date="1994" name="Nucleic Acids Res.">
        <title>Analysis of the Escherichia coli genome. V. DNA sequence of the region from 76.0 to 81.5 minutes.</title>
        <authorList>
            <person name="Sofia H.J."/>
            <person name="Burland V."/>
            <person name="Daniels D.L."/>
            <person name="Plunkett G. III"/>
            <person name="Blattner F.R."/>
        </authorList>
    </citation>
    <scope>NUCLEOTIDE SEQUENCE [LARGE SCALE GENOMIC DNA]</scope>
    <source>
        <strain>K12 / MG1655 / ATCC 47076</strain>
    </source>
</reference>
<reference key="2">
    <citation type="journal article" date="1996" name="DNA Res.">
        <title>A 570-kb DNA sequence of the Escherichia coli K-12 genome corresponding to the 28.0-40.1 min region on the linkage map.</title>
        <authorList>
            <person name="Aiba H."/>
            <person name="Baba T."/>
            <person name="Fujita K."/>
            <person name="Hayashi K."/>
            <person name="Inada T."/>
            <person name="Isono K."/>
            <person name="Itoh T."/>
            <person name="Kasai H."/>
            <person name="Kashimoto K."/>
            <person name="Kimura S."/>
            <person name="Kitakawa M."/>
            <person name="Kitagawa M."/>
            <person name="Makino K."/>
            <person name="Miki T."/>
            <person name="Mizobuchi K."/>
            <person name="Mori H."/>
            <person name="Mori T."/>
            <person name="Motomura K."/>
            <person name="Nakade S."/>
            <person name="Nakamura Y."/>
            <person name="Nashimoto H."/>
            <person name="Nishio Y."/>
            <person name="Oshima T."/>
            <person name="Saito N."/>
            <person name="Sampei G."/>
            <person name="Seki Y."/>
            <person name="Sivasundaram S."/>
            <person name="Tagami H."/>
            <person name="Takeda J."/>
            <person name="Takemoto K."/>
            <person name="Takeuchi Y."/>
            <person name="Wada C."/>
            <person name="Yamamoto Y."/>
            <person name="Horiuchi T."/>
        </authorList>
    </citation>
    <scope>NUCLEOTIDE SEQUENCE [LARGE SCALE GENOMIC DNA]</scope>
    <source>
        <strain>K12 / W3110 / ATCC 27325 / DSM 5911</strain>
    </source>
</reference>
<reference key="3">
    <citation type="journal article" date="1996" name="DNA Res.">
        <title>A 460-kb DNA sequence of the Escherichia coli K-12 genome corresponding to the 40.1-50.0 min region on the linkage map.</title>
        <authorList>
            <person name="Itoh T."/>
            <person name="Aiba H."/>
            <person name="Baba T."/>
            <person name="Fujita K."/>
            <person name="Hayashi K."/>
            <person name="Inada T."/>
            <person name="Isono K."/>
            <person name="Kasai H."/>
            <person name="Kimura S."/>
            <person name="Kitakawa M."/>
            <person name="Kitagawa M."/>
            <person name="Makino K."/>
            <person name="Miki T."/>
            <person name="Mizobuchi K."/>
            <person name="Mori H."/>
            <person name="Mori T."/>
            <person name="Motomura K."/>
            <person name="Nakade S."/>
            <person name="Nakamura Y."/>
            <person name="Nashimoto H."/>
            <person name="Nishio Y."/>
            <person name="Oshima T."/>
            <person name="Saito N."/>
            <person name="Sampei G."/>
            <person name="Seki Y."/>
            <person name="Sivasundaram S."/>
            <person name="Tagami H."/>
            <person name="Takeda J."/>
            <person name="Takemoto K."/>
            <person name="Wada C."/>
            <person name="Yamamoto Y."/>
            <person name="Horiuchi T."/>
        </authorList>
    </citation>
    <scope>NUCLEOTIDE SEQUENCE [LARGE SCALE GENOMIC DNA]</scope>
    <source>
        <strain>K12 / W3110 / ATCC 27325 / DSM 5911</strain>
    </source>
</reference>
<reference key="4">
    <citation type="submission" date="1997-01" db="EMBL/GenBank/DDBJ databases">
        <title>Sequence of minutes 4-25 of Escherichia coli.</title>
        <authorList>
            <person name="Chung E."/>
            <person name="Allen E."/>
            <person name="Araujo R."/>
            <person name="Aparicio A.M."/>
            <person name="Davis K."/>
            <person name="Duncan M."/>
            <person name="Federspiel N."/>
            <person name="Hyman R."/>
            <person name="Kalman S."/>
            <person name="Komp C."/>
            <person name="Kurdi O."/>
            <person name="Lew H."/>
            <person name="Lin D."/>
            <person name="Namath A."/>
            <person name="Oefner P."/>
            <person name="Roberts D."/>
            <person name="Schramm S."/>
            <person name="Davis R.W."/>
        </authorList>
    </citation>
    <scope>NUCLEOTIDE SEQUENCE [LARGE SCALE GENOMIC DNA]</scope>
    <source>
        <strain>K12 / MG1655 / ATCC 47076</strain>
    </source>
</reference>
<reference key="5">
    <citation type="journal article" date="1997" name="Science">
        <title>The complete genome sequence of Escherichia coli K-12.</title>
        <authorList>
            <person name="Blattner F.R."/>
            <person name="Plunkett G. III"/>
            <person name="Bloch C.A."/>
            <person name="Perna N.T."/>
            <person name="Burland V."/>
            <person name="Riley M."/>
            <person name="Collado-Vides J."/>
            <person name="Glasner J.D."/>
            <person name="Rode C.K."/>
            <person name="Mayhew G.F."/>
            <person name="Gregor J."/>
            <person name="Davis N.W."/>
            <person name="Kirkpatrick H.A."/>
            <person name="Goeden M.A."/>
            <person name="Rose D.J."/>
            <person name="Mau B."/>
            <person name="Shao Y."/>
        </authorList>
    </citation>
    <scope>NUCLEOTIDE SEQUENCE [LARGE SCALE GENOMIC DNA]</scope>
    <source>
        <strain>K12 / MG1655 / ATCC 47076</strain>
    </source>
</reference>
<reference key="6">
    <citation type="journal article" date="2006" name="Mol. Syst. Biol.">
        <title>Highly accurate genome sequences of Escherichia coli K-12 strains MG1655 and W3110.</title>
        <authorList>
            <person name="Hayashi K."/>
            <person name="Morooka N."/>
            <person name="Yamamoto Y."/>
            <person name="Fujita K."/>
            <person name="Isono K."/>
            <person name="Choi S."/>
            <person name="Ohtsubo E."/>
            <person name="Baba T."/>
            <person name="Wanner B.L."/>
            <person name="Mori H."/>
            <person name="Horiuchi T."/>
        </authorList>
    </citation>
    <scope>NUCLEOTIDE SEQUENCE [LARGE SCALE GENOMIC DNA]</scope>
    <source>
        <strain>K12 / W3110 / ATCC 27325 / DSM 5911</strain>
    </source>
</reference>